<accession>Q98QD7</accession>
<proteinExistence type="inferred from homology"/>
<keyword id="KW-1185">Reference proteome</keyword>
<keyword id="KW-0687">Ribonucleoprotein</keyword>
<keyword id="KW-0689">Ribosomal protein</keyword>
<keyword id="KW-0694">RNA-binding</keyword>
<keyword id="KW-0699">rRNA-binding</keyword>
<keyword id="KW-0820">tRNA-binding</keyword>
<name>RS7_MYCPU</name>
<organism>
    <name type="scientific">Mycoplasmopsis pulmonis (strain UAB CTIP)</name>
    <name type="common">Mycoplasma pulmonis</name>
    <dbReference type="NCBI Taxonomy" id="272635"/>
    <lineage>
        <taxon>Bacteria</taxon>
        <taxon>Bacillati</taxon>
        <taxon>Mycoplasmatota</taxon>
        <taxon>Mycoplasmoidales</taxon>
        <taxon>Metamycoplasmataceae</taxon>
        <taxon>Mycoplasmopsis</taxon>
    </lineage>
</organism>
<dbReference type="EMBL" id="AL445564">
    <property type="protein sequence ID" value="CAC13602.1"/>
    <property type="molecule type" value="Genomic_DNA"/>
</dbReference>
<dbReference type="PIR" id="E90565">
    <property type="entry name" value="E90565"/>
</dbReference>
<dbReference type="RefSeq" id="WP_010925230.1">
    <property type="nucleotide sequence ID" value="NC_002771.1"/>
</dbReference>
<dbReference type="SMR" id="Q98QD7"/>
<dbReference type="STRING" id="272635.gene:17577029"/>
<dbReference type="KEGG" id="mpu:MYPU_4290"/>
<dbReference type="eggNOG" id="COG0049">
    <property type="taxonomic scope" value="Bacteria"/>
</dbReference>
<dbReference type="HOGENOM" id="CLU_072226_1_1_14"/>
<dbReference type="BioCyc" id="MPUL272635:G1GT6-433-MONOMER"/>
<dbReference type="Proteomes" id="UP000000528">
    <property type="component" value="Chromosome"/>
</dbReference>
<dbReference type="GO" id="GO:0015935">
    <property type="term" value="C:small ribosomal subunit"/>
    <property type="evidence" value="ECO:0007669"/>
    <property type="project" value="InterPro"/>
</dbReference>
<dbReference type="GO" id="GO:0019843">
    <property type="term" value="F:rRNA binding"/>
    <property type="evidence" value="ECO:0007669"/>
    <property type="project" value="UniProtKB-UniRule"/>
</dbReference>
<dbReference type="GO" id="GO:0003735">
    <property type="term" value="F:structural constituent of ribosome"/>
    <property type="evidence" value="ECO:0007669"/>
    <property type="project" value="InterPro"/>
</dbReference>
<dbReference type="GO" id="GO:0000049">
    <property type="term" value="F:tRNA binding"/>
    <property type="evidence" value="ECO:0007669"/>
    <property type="project" value="UniProtKB-UniRule"/>
</dbReference>
<dbReference type="GO" id="GO:0006412">
    <property type="term" value="P:translation"/>
    <property type="evidence" value="ECO:0007669"/>
    <property type="project" value="UniProtKB-UniRule"/>
</dbReference>
<dbReference type="CDD" id="cd14869">
    <property type="entry name" value="uS7_Bacteria"/>
    <property type="match status" value="1"/>
</dbReference>
<dbReference type="FunFam" id="1.10.455.10:FF:000001">
    <property type="entry name" value="30S ribosomal protein S7"/>
    <property type="match status" value="1"/>
</dbReference>
<dbReference type="Gene3D" id="1.10.455.10">
    <property type="entry name" value="Ribosomal protein S7 domain"/>
    <property type="match status" value="1"/>
</dbReference>
<dbReference type="HAMAP" id="MF_00480_B">
    <property type="entry name" value="Ribosomal_uS7_B"/>
    <property type="match status" value="1"/>
</dbReference>
<dbReference type="InterPro" id="IPR000235">
    <property type="entry name" value="Ribosomal_uS7"/>
</dbReference>
<dbReference type="InterPro" id="IPR005717">
    <property type="entry name" value="Ribosomal_uS7_bac/org-type"/>
</dbReference>
<dbReference type="InterPro" id="IPR023798">
    <property type="entry name" value="Ribosomal_uS7_dom"/>
</dbReference>
<dbReference type="InterPro" id="IPR036823">
    <property type="entry name" value="Ribosomal_uS7_dom_sf"/>
</dbReference>
<dbReference type="NCBIfam" id="TIGR01029">
    <property type="entry name" value="rpsG_bact"/>
    <property type="match status" value="1"/>
</dbReference>
<dbReference type="PANTHER" id="PTHR11205">
    <property type="entry name" value="RIBOSOMAL PROTEIN S7"/>
    <property type="match status" value="1"/>
</dbReference>
<dbReference type="Pfam" id="PF00177">
    <property type="entry name" value="Ribosomal_S7"/>
    <property type="match status" value="1"/>
</dbReference>
<dbReference type="PIRSF" id="PIRSF002122">
    <property type="entry name" value="RPS7p_RPS7a_RPS5e_RPS7o"/>
    <property type="match status" value="1"/>
</dbReference>
<dbReference type="SUPFAM" id="SSF47973">
    <property type="entry name" value="Ribosomal protein S7"/>
    <property type="match status" value="1"/>
</dbReference>
<protein>
    <recommendedName>
        <fullName evidence="1">Small ribosomal subunit protein uS7</fullName>
    </recommendedName>
    <alternativeName>
        <fullName evidence="2">30S ribosomal protein S7</fullName>
    </alternativeName>
</protein>
<evidence type="ECO:0000255" key="1">
    <source>
        <dbReference type="HAMAP-Rule" id="MF_00480"/>
    </source>
</evidence>
<evidence type="ECO:0000305" key="2"/>
<feature type="chain" id="PRO_0000124304" description="Small ribosomal subunit protein uS7">
    <location>
        <begin position="1"/>
        <end position="156"/>
    </location>
</feature>
<comment type="function">
    <text evidence="1">One of the primary rRNA binding proteins, it binds directly to 16S rRNA where it nucleates assembly of the head domain of the 30S subunit. Is located at the subunit interface close to the decoding center, probably blocks exit of the E-site tRNA.</text>
</comment>
<comment type="subunit">
    <text evidence="1">Part of the 30S ribosomal subunit. Contacts proteins S9 and S11.</text>
</comment>
<comment type="similarity">
    <text evidence="1">Belongs to the universal ribosomal protein uS7 family.</text>
</comment>
<sequence length="156" mass="18015">MSRKHKAPIRTVLADPVFNMVVVTKLVNTIMLDGKKSIAQNIVYSAFDIIKEKTGREPYEVFQEALNNITPLLEIRTRRIGGSNYQVPTEVSKRRQQTLSLRWLTNYARLRNEKTMDLRLANEIIDASNKTGGAIKKREDTHKMAEANRAFAHFRW</sequence>
<reference key="1">
    <citation type="journal article" date="2001" name="Nucleic Acids Res.">
        <title>The complete genome sequence of the murine respiratory pathogen Mycoplasma pulmonis.</title>
        <authorList>
            <person name="Chambaud I."/>
            <person name="Heilig R."/>
            <person name="Ferris S."/>
            <person name="Barbe V."/>
            <person name="Samson D."/>
            <person name="Galisson F."/>
            <person name="Moszer I."/>
            <person name="Dybvig K."/>
            <person name="Wroblewski H."/>
            <person name="Viari A."/>
            <person name="Rocha E.P.C."/>
            <person name="Blanchard A."/>
        </authorList>
    </citation>
    <scope>NUCLEOTIDE SEQUENCE [LARGE SCALE GENOMIC DNA]</scope>
    <source>
        <strain>UAB CTIP</strain>
    </source>
</reference>
<gene>
    <name evidence="1" type="primary">rpsG</name>
    <name type="ordered locus">MYPU_4290</name>
</gene>